<sequence>MKIILWLCVFGLFLATLFPISWQMPVESGLSSEDSASSESFASKIKRHGEGTFTSDLSKQMEEEAVRLFIEWLKNGGPSSGAPPPSG</sequence>
<feature type="signal peptide" evidence="1">
    <location>
        <begin position="1"/>
        <end position="23"/>
    </location>
</feature>
<feature type="propeptide" id="PRO_0000011421">
    <location>
        <begin position="24"/>
        <end position="45"/>
    </location>
</feature>
<feature type="peptide" id="PRO_0000011422" description="Exendin-4">
    <location>
        <begin position="48"/>
        <end position="86"/>
    </location>
</feature>
<feature type="modified residue" description="Serine amide" evidence="2">
    <location>
        <position position="86"/>
    </location>
</feature>
<feature type="sequence conflict" description="In Ref. 2; no nucleotide entry." evidence="6" ref="2">
    <original>F</original>
    <variation>G</variation>
    <location>
        <position position="13"/>
    </location>
</feature>
<feature type="strand" evidence="9">
    <location>
        <begin position="54"/>
        <end position="56"/>
    </location>
</feature>
<feature type="helix" evidence="8">
    <location>
        <begin position="57"/>
        <end position="74"/>
    </location>
</feature>
<feature type="helix" evidence="8">
    <location>
        <begin position="77"/>
        <end position="79"/>
    </location>
</feature>
<feature type="strand" evidence="7">
    <location>
        <begin position="80"/>
        <end position="82"/>
    </location>
</feature>
<comment type="function">
    <text evidence="4 5">Venom protein that mimics the incretin hormone glucagon-like peptide 1 (GLP-1). It stimulates insulin synthesis and secretion, protects against beta-cell apoptosis in response to different insults, and promotes beta-cell proliferation. It also promotes satiety, reduces food intake, reduces fat deposition, reduces body weight and inhibits gastric emptying. Interacts with GLP-1 receptor (GLP1R). Induces hypotension that is mediated by relaxation of cardiac smooth muscle.</text>
</comment>
<comment type="subcellular location">
    <subcellularLocation>
        <location>Secreted</location>
    </subcellularLocation>
</comment>
<comment type="tissue specificity">
    <text>Expressed by the venom gland.</text>
</comment>
<comment type="mass spectrometry"/>
<comment type="pharmaceutical">
    <text>Available under the name Byetta and Bydureon (extended-release exenatide) (Amylin Pharmaceuticals). Used for the treatment of type 2 diabetes. Enhances insulin secretion in response to elevated plasma glucose levels.</text>
</comment>
<comment type="similarity">
    <text evidence="6">Belongs to the glucagon family.</text>
</comment>
<keyword id="KW-0002">3D-structure</keyword>
<keyword id="KW-0027">Amidation</keyword>
<keyword id="KW-0165">Cleavage on pair of basic residues</keyword>
<keyword id="KW-0903">Direct protein sequencing</keyword>
<keyword id="KW-1213">G-protein coupled receptor impairing toxin</keyword>
<keyword id="KW-0382">Hypotensive agent</keyword>
<keyword id="KW-0582">Pharmaceutical</keyword>
<keyword id="KW-0964">Secreted</keyword>
<keyword id="KW-0732">Signal</keyword>
<keyword id="KW-0800">Toxin</keyword>
<proteinExistence type="evidence at protein level"/>
<protein>
    <recommendedName>
        <fullName>Exendin-4</fullName>
    </recommendedName>
    <innName>Exenatide</innName>
</protein>
<evidence type="ECO:0000255" key="1"/>
<evidence type="ECO:0000269" key="2">
    <source>
    </source>
</evidence>
<evidence type="ECO:0000269" key="3">
    <source>
    </source>
</evidence>
<evidence type="ECO:0000269" key="4">
    <source>
    </source>
</evidence>
<evidence type="ECO:0000269" key="5">
    <source>
    </source>
</evidence>
<evidence type="ECO:0000305" key="6"/>
<evidence type="ECO:0007829" key="7">
    <source>
        <dbReference type="PDB" id="1JRJ"/>
    </source>
</evidence>
<evidence type="ECO:0007829" key="8">
    <source>
        <dbReference type="PDB" id="5OTT"/>
    </source>
</evidence>
<evidence type="ECO:0007829" key="9">
    <source>
        <dbReference type="PDB" id="7MLL"/>
    </source>
</evidence>
<dbReference type="EMBL" id="U77613">
    <property type="protein sequence ID" value="AAB51130.1"/>
    <property type="molecule type" value="mRNA"/>
</dbReference>
<dbReference type="PIR" id="A42486">
    <property type="entry name" value="HWGH4G"/>
</dbReference>
<dbReference type="PDB" id="1JRJ">
    <property type="method" value="NMR"/>
    <property type="chains" value="A=48-86"/>
</dbReference>
<dbReference type="PDB" id="2MJ9">
    <property type="method" value="NMR"/>
    <property type="chains" value="A=48-86"/>
</dbReference>
<dbReference type="PDB" id="2NAV">
    <property type="method" value="NMR"/>
    <property type="chains" value="A=48-56"/>
</dbReference>
<dbReference type="PDB" id="2NAW">
    <property type="method" value="NMR"/>
    <property type="chains" value="A=48-77"/>
</dbReference>
<dbReference type="PDB" id="3C59">
    <property type="method" value="X-ray"/>
    <property type="resolution" value="2.30 A"/>
    <property type="chains" value="B=56-86"/>
</dbReference>
<dbReference type="PDB" id="3C5T">
    <property type="method" value="X-ray"/>
    <property type="resolution" value="2.10 A"/>
    <property type="chains" value="B=56-86"/>
</dbReference>
<dbReference type="PDB" id="5NIQ">
    <property type="method" value="NMR"/>
    <property type="chains" value="A=48-86"/>
</dbReference>
<dbReference type="PDB" id="5OTT">
    <property type="method" value="X-ray"/>
    <property type="resolution" value="1.92 A"/>
    <property type="chains" value="B=48-86"/>
</dbReference>
<dbReference type="PDB" id="6GDZ">
    <property type="method" value="NMR"/>
    <property type="chains" value="A=48-86"/>
</dbReference>
<dbReference type="PDB" id="6GE2">
    <property type="method" value="NMR"/>
    <property type="chains" value="A=48-86"/>
</dbReference>
<dbReference type="PDB" id="7LLL">
    <property type="method" value="EM"/>
    <property type="resolution" value="3.70 A"/>
    <property type="chains" value="P=48-86"/>
</dbReference>
<dbReference type="PDB" id="7MLL">
    <property type="method" value="NMR"/>
    <property type="chains" value="A=48-86"/>
</dbReference>
<dbReference type="PDB" id="9G0M">
    <property type="method" value="NMR"/>
    <property type="chains" value="A=62-86"/>
</dbReference>
<dbReference type="PDB" id="9G0N">
    <property type="method" value="NMR"/>
    <property type="chains" value="A=62-86"/>
</dbReference>
<dbReference type="PDB" id="9G20">
    <property type="method" value="NMR"/>
    <property type="chains" value="A=62-86"/>
</dbReference>
<dbReference type="PDB" id="9G21">
    <property type="method" value="NMR"/>
    <property type="chains" value="A=62-86"/>
</dbReference>
<dbReference type="PDB" id="9G22">
    <property type="method" value="NMR"/>
    <property type="chains" value="A=62-86"/>
</dbReference>
<dbReference type="PDB" id="9G2N">
    <property type="method" value="NMR"/>
    <property type="chains" value="A=62-86"/>
</dbReference>
<dbReference type="PDB" id="9G2O">
    <property type="method" value="NMR"/>
    <property type="chains" value="A=62-86"/>
</dbReference>
<dbReference type="PDB" id="9G31">
    <property type="method" value="NMR"/>
    <property type="chains" value="A=62-86"/>
</dbReference>
<dbReference type="PDB" id="9G32">
    <property type="method" value="NMR"/>
    <property type="chains" value="A=62-86"/>
</dbReference>
<dbReference type="PDB" id="9G5P">
    <property type="method" value="NMR"/>
    <property type="chains" value="A=62-86"/>
</dbReference>
<dbReference type="PDBsum" id="1JRJ"/>
<dbReference type="PDBsum" id="2MJ9"/>
<dbReference type="PDBsum" id="2NAV"/>
<dbReference type="PDBsum" id="2NAW"/>
<dbReference type="PDBsum" id="3C59"/>
<dbReference type="PDBsum" id="3C5T"/>
<dbReference type="PDBsum" id="5NIQ"/>
<dbReference type="PDBsum" id="5OTT"/>
<dbReference type="PDBsum" id="6GDZ"/>
<dbReference type="PDBsum" id="6GE2"/>
<dbReference type="PDBsum" id="7LLL"/>
<dbReference type="PDBsum" id="7MLL"/>
<dbReference type="PDBsum" id="9G0M"/>
<dbReference type="PDBsum" id="9G0N"/>
<dbReference type="PDBsum" id="9G20"/>
<dbReference type="PDBsum" id="9G21"/>
<dbReference type="PDBsum" id="9G22"/>
<dbReference type="PDBsum" id="9G2N"/>
<dbReference type="PDBsum" id="9G2O"/>
<dbReference type="PDBsum" id="9G31"/>
<dbReference type="PDBsum" id="9G32"/>
<dbReference type="PDBsum" id="9G5P"/>
<dbReference type="BMRB" id="P26349"/>
<dbReference type="EMDB" id="EMD-23425"/>
<dbReference type="SMR" id="P26349"/>
<dbReference type="Allergome" id="11965">
    <property type="allergen name" value="Hel su Exenatide"/>
</dbReference>
<dbReference type="EvolutionaryTrace" id="P26349"/>
<dbReference type="GO" id="GO:0005576">
    <property type="term" value="C:extracellular region"/>
    <property type="evidence" value="ECO:0007669"/>
    <property type="project" value="UniProtKB-SubCell"/>
</dbReference>
<dbReference type="GO" id="GO:0005179">
    <property type="term" value="F:hormone activity"/>
    <property type="evidence" value="ECO:0007669"/>
    <property type="project" value="InterPro"/>
</dbReference>
<dbReference type="GO" id="GO:0090729">
    <property type="term" value="F:toxin activity"/>
    <property type="evidence" value="ECO:0007669"/>
    <property type="project" value="UniProtKB-KW"/>
</dbReference>
<dbReference type="GO" id="GO:0008217">
    <property type="term" value="P:regulation of blood pressure"/>
    <property type="evidence" value="ECO:0007669"/>
    <property type="project" value="UniProtKB-KW"/>
</dbReference>
<dbReference type="Gene3D" id="6.10.250.590">
    <property type="match status" value="1"/>
</dbReference>
<dbReference type="InterPro" id="IPR000532">
    <property type="entry name" value="Glucagon_GIP_secretin_VIP"/>
</dbReference>
<dbReference type="Pfam" id="PF00123">
    <property type="entry name" value="Hormone_2"/>
    <property type="match status" value="1"/>
</dbReference>
<dbReference type="SMART" id="SM00070">
    <property type="entry name" value="GLUCA"/>
    <property type="match status" value="1"/>
</dbReference>
<dbReference type="PROSITE" id="PS00260">
    <property type="entry name" value="GLUCAGON"/>
    <property type="match status" value="1"/>
</dbReference>
<name>EXE4_HELSU</name>
<organism>
    <name type="scientific">Heloderma suspectum</name>
    <name type="common">Gila monster</name>
    <dbReference type="NCBI Taxonomy" id="8554"/>
    <lineage>
        <taxon>Eukaryota</taxon>
        <taxon>Metazoa</taxon>
        <taxon>Chordata</taxon>
        <taxon>Craniata</taxon>
        <taxon>Vertebrata</taxon>
        <taxon>Euteleostomi</taxon>
        <taxon>Lepidosauria</taxon>
        <taxon>Squamata</taxon>
        <taxon>Bifurcata</taxon>
        <taxon>Unidentata</taxon>
        <taxon>Episquamata</taxon>
        <taxon>Toxicofera</taxon>
        <taxon>Anguimorpha</taxon>
        <taxon>Neoanguimorpha</taxon>
        <taxon>Helodermatidae</taxon>
        <taxon>Heloderma</taxon>
    </lineage>
</organism>
<reference key="1">
    <citation type="journal article" date="1997" name="J. Biol. Chem.">
        <title>Tissue-specific expression of unique mRNAs that encode proglucagon-derived peptides or exendin 4 in the lizard.</title>
        <authorList>
            <person name="Chen Y.E."/>
            <person name="Drucker D.J."/>
        </authorList>
    </citation>
    <scope>NUCLEOTIDE SEQUENCE [MRNA]</scope>
</reference>
<reference key="2">
    <citation type="journal article" date="1998" name="J. Biol. Chem.">
        <title>Molecular cloning of the helodermin and exendin-4 cDNAs in the lizard. Relationship to vasoactive intestinal polypeptide/pituitary adenylate cyclase activating polypeptide and glucagon-like peptide 1 and evidence against the existence of mammalian homologues.</title>
        <authorList>
            <person name="Pohl M."/>
            <person name="Wank S.A."/>
        </authorList>
    </citation>
    <scope>NUCLEOTIDE SEQUENCE [MRNA]</scope>
</reference>
<reference key="3">
    <citation type="journal article" date="2006" name="Toxicon">
        <title>Isolation and cloning of exendin precursor cDNAs from single samples of venom from the Mexican beaded lizard (Heloderma horridum) and the Gila monster (Heloderma suspectum).</title>
        <authorList>
            <person name="Chen T."/>
            <person name="Kwok H."/>
            <person name="Ivanyi C."/>
            <person name="Shaw C."/>
        </authorList>
    </citation>
    <scope>NUCLEOTIDE SEQUENCE [MRNA]</scope>
    <scope>PROTEIN SEQUENCE OF 48-86</scope>
    <scope>MASS SPECTROMETRY</scope>
    <source>
        <tissue>Venom</tissue>
    </source>
</reference>
<reference key="4">
    <citation type="journal article" date="1992" name="J. Biol. Chem.">
        <title>Isolation and characterization of exendin-4, an exendin-3 analogue, from Heloderma suspectum venom. Further evidence for an exendin receptor on dispersed acini from guinea pig pancreas.</title>
        <authorList>
            <person name="Eng J."/>
            <person name="Kleinman W.A."/>
            <person name="Singh L."/>
            <person name="Singh G."/>
            <person name="Raufman J.-P."/>
        </authorList>
    </citation>
    <scope>PROTEIN SEQUENCE OF 48-86</scope>
    <scope>AMIDATION AT SER-86</scope>
    <source>
        <tissue>Venom</tissue>
    </source>
</reference>
<reference key="5">
    <citation type="journal article" date="1993" name="Diabetes">
        <title>Cloning and functional expression of the human islet GLP-1 receptor. Demonstration that exendin-4 is an agonist and exendin-(9-39) an antagonist of the receptor.</title>
        <authorList>
            <person name="Thorens B."/>
            <person name="Porret A."/>
            <person name="Buehler L."/>
            <person name="Deng S."/>
            <person name="Morel P."/>
            <person name="Widmann C."/>
        </authorList>
    </citation>
    <scope>FUNCTION</scope>
</reference>
<reference key="6">
    <citation type="journal article" date="2010" name="Mol. Biol. Evol.">
        <title>Novel venom proteins produced by differential domain-expression strategies in beaded lizards and gila monsters (genus Heloderma).</title>
        <authorList>
            <person name="Fry B.G."/>
            <person name="Roelants K."/>
            <person name="Winter K."/>
            <person name="Hodgson W.C."/>
            <person name="Griesman L."/>
            <person name="Kwok H.F."/>
            <person name="Scanlon D."/>
            <person name="Karas J."/>
            <person name="Shaw C."/>
            <person name="Wong L."/>
            <person name="Norman J.A."/>
        </authorList>
    </citation>
    <scope>SYNTHESIS OF 48-86</scope>
    <scope>FUNCTION</scope>
</reference>
<reference key="7">
    <citation type="journal article" date="2012" name="Toxicon">
        <title>The development of Byetta (exenatide) from the venom of the Gila monster as an anti-diabetic agent.</title>
        <authorList>
            <person name="Furman B.L."/>
        </authorList>
    </citation>
    <scope>REVIEW</scope>
    <scope>PHARMACEUTICAL</scope>
</reference>
<reference key="8">
    <citation type="journal article" date="2014" name="Diabetes Metab. Syndr. Obes.">
        <title>Exenatide extended-release: a once weekly treatment for patients with type 2 diabetes.</title>
        <authorList>
            <person name="Mann K.V."/>
            <person name="Raskin P."/>
        </authorList>
    </citation>
    <scope>REVIEW</scope>
    <scope>PHARMACEUTICAL</scope>
</reference>
<reference key="9">
    <citation type="journal article" date="2001" name="Biochemistry">
        <title>Exendin-4 and glucagon-like-peptide-1: NMR structural comparisons in the solution and micelle-associated states.</title>
        <authorList>
            <person name="Neidigh J.W."/>
            <person name="Fesinmeyer R.M."/>
            <person name="Prickett K.S."/>
            <person name="Andersen N.H."/>
        </authorList>
    </citation>
    <scope>STRUCTURE BY NMR OF 48-86</scope>
</reference>
<accession>P26349</accession>